<comment type="subcellular location">
    <subcellularLocation>
        <location>Plastid</location>
        <location>Chloroplast</location>
    </subcellularLocation>
</comment>
<name>YCXD_TRICV</name>
<geneLocation type="chloroplast"/>
<organism>
    <name type="scientific">Trieres chinensis</name>
    <name type="common">Marine centric diatom</name>
    <name type="synonym">Odontella sinensis</name>
    <dbReference type="NCBI Taxonomy" id="1514140"/>
    <lineage>
        <taxon>Eukaryota</taxon>
        <taxon>Sar</taxon>
        <taxon>Stramenopiles</taxon>
        <taxon>Ochrophyta</taxon>
        <taxon>Bacillariophyta</taxon>
        <taxon>Mediophyceae</taxon>
        <taxon>Biddulphiophycidae</taxon>
        <taxon>Eupodiscales</taxon>
        <taxon>Parodontellaceae</taxon>
        <taxon>Trieres</taxon>
    </lineage>
</organism>
<feature type="chain" id="PRO_0000217464" description="Uncharacterized 3.2 kDa protein in rpoC2-rps2 intergenic region">
    <location>
        <begin position="1"/>
        <end position="26"/>
    </location>
</feature>
<proteinExistence type="predicted"/>
<protein>
    <recommendedName>
        <fullName>Uncharacterized 3.2 kDa protein in rpoC2-rps2 intergenic region</fullName>
    </recommendedName>
    <alternativeName>
        <fullName>ORF26B</fullName>
    </alternativeName>
</protein>
<accession>P49839</accession>
<dbReference type="EMBL" id="Z67753">
    <property type="protein sequence ID" value="CAA91747.1"/>
    <property type="molecule type" value="Genomic_DNA"/>
</dbReference>
<dbReference type="PIR" id="S78374">
    <property type="entry name" value="S78374"/>
</dbReference>
<dbReference type="RefSeq" id="NP_043715.1">
    <property type="nucleotide sequence ID" value="NC_001713.1"/>
</dbReference>
<dbReference type="GeneID" id="1457275"/>
<dbReference type="GO" id="GO:0009507">
    <property type="term" value="C:chloroplast"/>
    <property type="evidence" value="ECO:0007669"/>
    <property type="project" value="UniProtKB-SubCell"/>
</dbReference>
<sequence length="26" mass="3137">MVLVKTIKKLDGFIECLLMLNYKFLY</sequence>
<keyword id="KW-0150">Chloroplast</keyword>
<keyword id="KW-0934">Plastid</keyword>
<reference key="1">
    <citation type="journal article" date="1995" name="Plant Mol. Biol. Rep.">
        <title>The chloroplast genome of a chlorophyll a+c-containing alga, Odontella sinensis.</title>
        <authorList>
            <person name="Kowallik K.V."/>
            <person name="Stoebe B."/>
            <person name="Schaffran I."/>
            <person name="Kroth-Pancic P."/>
            <person name="Freier U."/>
        </authorList>
    </citation>
    <scope>NUCLEOTIDE SEQUENCE [LARGE SCALE GENOMIC DNA]</scope>
</reference>